<keyword id="KW-0507">mRNA processing</keyword>
<keyword id="KW-0508">mRNA splicing</keyword>
<keyword id="KW-0539">Nucleus</keyword>
<keyword id="KW-1185">Reference proteome</keyword>
<keyword id="KW-0747">Spliceosome</keyword>
<protein>
    <recommendedName>
        <fullName>Microfibrillar-associated protein 1</fullName>
    </recommendedName>
    <alternativeName>
        <fullName evidence="4">Associated microfibril protein</fullName>
        <shortName>AMF</shortName>
    </alternativeName>
    <alternativeName>
        <fullName evidence="1">Spliceosome B complex protein MFAP1</fullName>
    </alternativeName>
</protein>
<sequence>MSAPSALVKQPPIQSTAGACPSRNEKGRAVYGEGEGETVCVGKAAADYVPMESSEEEDEEFQFIKKAKEQEVEPEEQEEEVANDPRLRRLLQNRITEDVEERLARHRKIVEPEVVSGESDSEVEGEAWRVEREDTSEEEEEEIDDEEIERWRGMMRQRAQERKTEELEVMELEDEGRSGEESELESEYEEYTDSEDEMEPRLKPVFIRKKDRITVQEREAEALKQKELEQEAKRLAEERRKYTLKIVEEEAKKELEENKRSLAALDALDTDDENDEEEYEAWKVRELKRIKRDREEREAMEKEKAEIERMRNLTEEERRAELRANGKVVTNKAVKGKYKFLQKYYHRGAFFMDEDEEVYKRDFSAPTLEDHFNKTILPKVMQVKNFGRSGRTKYTHLVDQDTTSFDSAWGQESAQNTKFFKQKAAGVRDVFERPSAKKRKTT</sequence>
<evidence type="ECO:0000250" key="1">
    <source>
        <dbReference type="UniProtKB" id="P55081"/>
    </source>
</evidence>
<evidence type="ECO:0000256" key="2">
    <source>
        <dbReference type="SAM" id="MobiDB-lite"/>
    </source>
</evidence>
<evidence type="ECO:0000269" key="3">
    <source>
    </source>
</evidence>
<evidence type="ECO:0000303" key="4">
    <source>
    </source>
</evidence>
<evidence type="ECO:0000305" key="5"/>
<proteinExistence type="evidence at transcript level"/>
<dbReference type="EMBL" id="M76679">
    <property type="status" value="NOT_ANNOTATED_CDS"/>
    <property type="molecule type" value="mRNA"/>
</dbReference>
<dbReference type="PIR" id="A42670">
    <property type="entry name" value="A42670"/>
</dbReference>
<dbReference type="SMR" id="P55080"/>
<dbReference type="FunCoup" id="P55080">
    <property type="interactions" value="27"/>
</dbReference>
<dbReference type="STRING" id="9031.ENSGALP00000041134"/>
<dbReference type="VEuPathDB" id="HostDB:geneid_415586"/>
<dbReference type="eggNOG" id="KOG1425">
    <property type="taxonomic scope" value="Eukaryota"/>
</dbReference>
<dbReference type="InParanoid" id="P55080"/>
<dbReference type="OrthoDB" id="1111734at2759"/>
<dbReference type="PhylomeDB" id="P55080"/>
<dbReference type="Proteomes" id="UP000000539">
    <property type="component" value="Unassembled WGS sequence"/>
</dbReference>
<dbReference type="GO" id="GO:0005634">
    <property type="term" value="C:nucleus"/>
    <property type="evidence" value="ECO:0000250"/>
    <property type="project" value="UniProtKB"/>
</dbReference>
<dbReference type="GO" id="GO:0071005">
    <property type="term" value="C:U2-type precatalytic spliceosome"/>
    <property type="evidence" value="ECO:0000250"/>
    <property type="project" value="UniProtKB"/>
</dbReference>
<dbReference type="GO" id="GO:0005684">
    <property type="term" value="C:U2-type spliceosomal complex"/>
    <property type="evidence" value="ECO:0000318"/>
    <property type="project" value="GO_Central"/>
</dbReference>
<dbReference type="GO" id="GO:0000398">
    <property type="term" value="P:mRNA splicing, via spliceosome"/>
    <property type="evidence" value="ECO:0000250"/>
    <property type="project" value="UniProtKB"/>
</dbReference>
<dbReference type="InterPro" id="IPR033194">
    <property type="entry name" value="MFAP1"/>
</dbReference>
<dbReference type="InterPro" id="IPR009730">
    <property type="entry name" value="MFAP1_C"/>
</dbReference>
<dbReference type="PANTHER" id="PTHR15327">
    <property type="entry name" value="MICROFIBRIL-ASSOCIATED PROTEIN"/>
    <property type="match status" value="1"/>
</dbReference>
<dbReference type="Pfam" id="PF06991">
    <property type="entry name" value="MFAP1"/>
    <property type="match status" value="1"/>
</dbReference>
<accession>P55080</accession>
<comment type="function">
    <text evidence="1">Involved in pre-mRNA splicing as a component of the spliceosome.</text>
</comment>
<comment type="subunit">
    <text evidence="1">Component of the spliceosome B complex. Interacts with PRPF38A (via N-terminal interaction domain).</text>
</comment>
<comment type="subcellular location">
    <subcellularLocation>
        <location evidence="1">Nucleus</location>
    </subcellularLocation>
</comment>
<comment type="tissue specificity">
    <text evidence="3">Widely expressed.</text>
</comment>
<comment type="similarity">
    <text evidence="5">Belongs to the MFAP1 family.</text>
</comment>
<comment type="caution">
    <text evidence="1 3">Was initially identified as a component of the elastin-associated microfibrils (PubMed:1374398). More recent results indicate it is instead part of the spliceosome B complex.</text>
</comment>
<name>MFAP1_CHICK</name>
<reference key="1">
    <citation type="journal article" date="1992" name="J. Biol. Chem.">
        <title>Characterization of an associated microfibril protein through recombinant DNA techniques.</title>
        <authorList>
            <person name="Horrigan S.K."/>
            <person name="Rich C.B."/>
            <person name="Streeten B.W."/>
            <person name="Li Z.-Y."/>
            <person name="Foster J.A."/>
        </authorList>
    </citation>
    <scope>NUCLEOTIDE SEQUENCE [MRNA]</scope>
    <scope>TISSUE SPECIFICITY</scope>
    <source>
        <strain>White leghorn</strain>
        <tissue>Embryo</tissue>
    </source>
</reference>
<feature type="chain" id="PRO_0000096457" description="Microfibrillar-associated protein 1">
    <location>
        <begin position="1"/>
        <end position="442"/>
    </location>
</feature>
<feature type="region of interest" description="Disordered" evidence="2">
    <location>
        <begin position="1"/>
        <end position="34"/>
    </location>
</feature>
<feature type="region of interest" description="Disordered" evidence="2">
    <location>
        <begin position="113"/>
        <end position="203"/>
    </location>
</feature>
<feature type="compositionally biased region" description="Acidic residues" evidence="2">
    <location>
        <begin position="134"/>
        <end position="148"/>
    </location>
</feature>
<feature type="compositionally biased region" description="Acidic residues" evidence="2">
    <location>
        <begin position="181"/>
        <end position="198"/>
    </location>
</feature>
<gene>
    <name evidence="1" type="primary">MFAP1</name>
</gene>
<organism>
    <name type="scientific">Gallus gallus</name>
    <name type="common">Chicken</name>
    <dbReference type="NCBI Taxonomy" id="9031"/>
    <lineage>
        <taxon>Eukaryota</taxon>
        <taxon>Metazoa</taxon>
        <taxon>Chordata</taxon>
        <taxon>Craniata</taxon>
        <taxon>Vertebrata</taxon>
        <taxon>Euteleostomi</taxon>
        <taxon>Archelosauria</taxon>
        <taxon>Archosauria</taxon>
        <taxon>Dinosauria</taxon>
        <taxon>Saurischia</taxon>
        <taxon>Theropoda</taxon>
        <taxon>Coelurosauria</taxon>
        <taxon>Aves</taxon>
        <taxon>Neognathae</taxon>
        <taxon>Galloanserae</taxon>
        <taxon>Galliformes</taxon>
        <taxon>Phasianidae</taxon>
        <taxon>Phasianinae</taxon>
        <taxon>Gallus</taxon>
    </lineage>
</organism>